<gene>
    <name type="primary">hup</name>
    <name type="ordered locus">BU032</name>
</gene>
<comment type="function">
    <text evidence="1">Histone-like DNA-binding protein which is capable of wrapping DNA to stabilize it, and thus to prevent its denaturation under extreme environmental conditions.</text>
</comment>
<comment type="subunit">
    <text evidence="1">Homodimer.</text>
</comment>
<comment type="similarity">
    <text evidence="2">Belongs to the bacterial histone-like protein family.</text>
</comment>
<organism>
    <name type="scientific">Buchnera aphidicola subsp. Acyrthosiphon pisum (strain APS)</name>
    <name type="common">Acyrthosiphon pisum symbiotic bacterium</name>
    <dbReference type="NCBI Taxonomy" id="107806"/>
    <lineage>
        <taxon>Bacteria</taxon>
        <taxon>Pseudomonadati</taxon>
        <taxon>Pseudomonadota</taxon>
        <taxon>Gammaproteobacteria</taxon>
        <taxon>Enterobacterales</taxon>
        <taxon>Erwiniaceae</taxon>
        <taxon>Buchnera</taxon>
    </lineage>
</organism>
<reference key="1">
    <citation type="journal article" date="2000" name="Nature">
        <title>Genome sequence of the endocellular bacterial symbiont of aphids Buchnera sp. APS.</title>
        <authorList>
            <person name="Shigenobu S."/>
            <person name="Watanabe H."/>
            <person name="Hattori M."/>
            <person name="Sakaki Y."/>
            <person name="Ishikawa H."/>
        </authorList>
    </citation>
    <scope>NUCLEOTIDE SEQUENCE [LARGE SCALE GENOMIC DNA]</scope>
    <source>
        <strain>APS</strain>
    </source>
</reference>
<keyword id="KW-0226">DNA condensation</keyword>
<keyword id="KW-0238">DNA-binding</keyword>
<keyword id="KW-1185">Reference proteome</keyword>
<evidence type="ECO:0000250" key="1"/>
<evidence type="ECO:0000305" key="2"/>
<proteinExistence type="inferred from homology"/>
<accession>P57144</accession>
<sequence length="92" mass="10044">MNKTQLINVISKKSNLSKIQAKLTLETTLSTIIDSLKKGESVQIVGFGTFKVNLRSSRTGRNPQTGKEIQIPATKVPSFTSGKTLKNAIKQL</sequence>
<protein>
    <recommendedName>
        <fullName>DNA-binding protein HU</fullName>
    </recommendedName>
</protein>
<feature type="chain" id="PRO_0000104924" description="DNA-binding protein HU">
    <location>
        <begin position="1"/>
        <end position="92"/>
    </location>
</feature>
<dbReference type="EMBL" id="BA000003">
    <property type="protein sequence ID" value="BAB12759.1"/>
    <property type="molecule type" value="Genomic_DNA"/>
</dbReference>
<dbReference type="RefSeq" id="NP_239873.1">
    <property type="nucleotide sequence ID" value="NC_002528.1"/>
</dbReference>
<dbReference type="RefSeq" id="WP_010895910.1">
    <property type="nucleotide sequence ID" value="NZ_AP036055.1"/>
</dbReference>
<dbReference type="SMR" id="P57144"/>
<dbReference type="STRING" id="563178.BUAP5A_031"/>
<dbReference type="EnsemblBacteria" id="BAB12759">
    <property type="protein sequence ID" value="BAB12759"/>
    <property type="gene ID" value="BAB12759"/>
</dbReference>
<dbReference type="KEGG" id="buc:BU032"/>
<dbReference type="PATRIC" id="fig|107806.10.peg.44"/>
<dbReference type="eggNOG" id="COG0776">
    <property type="taxonomic scope" value="Bacteria"/>
</dbReference>
<dbReference type="HOGENOM" id="CLU_105066_3_1_6"/>
<dbReference type="Proteomes" id="UP000001806">
    <property type="component" value="Chromosome"/>
</dbReference>
<dbReference type="GO" id="GO:0005829">
    <property type="term" value="C:cytosol"/>
    <property type="evidence" value="ECO:0007669"/>
    <property type="project" value="TreeGrafter"/>
</dbReference>
<dbReference type="GO" id="GO:0003677">
    <property type="term" value="F:DNA binding"/>
    <property type="evidence" value="ECO:0007669"/>
    <property type="project" value="UniProtKB-KW"/>
</dbReference>
<dbReference type="GO" id="GO:0030527">
    <property type="term" value="F:structural constituent of chromatin"/>
    <property type="evidence" value="ECO:0007669"/>
    <property type="project" value="InterPro"/>
</dbReference>
<dbReference type="GO" id="GO:0030261">
    <property type="term" value="P:chromosome condensation"/>
    <property type="evidence" value="ECO:0007669"/>
    <property type="project" value="UniProtKB-KW"/>
</dbReference>
<dbReference type="CDD" id="cd13831">
    <property type="entry name" value="HU"/>
    <property type="match status" value="1"/>
</dbReference>
<dbReference type="FunFam" id="4.10.520.10:FF:000001">
    <property type="entry name" value="DNA-binding protein HU"/>
    <property type="match status" value="1"/>
</dbReference>
<dbReference type="Gene3D" id="4.10.520.10">
    <property type="entry name" value="IHF-like DNA-binding proteins"/>
    <property type="match status" value="1"/>
</dbReference>
<dbReference type="InterPro" id="IPR000119">
    <property type="entry name" value="Hist_DNA-bd"/>
</dbReference>
<dbReference type="InterPro" id="IPR020816">
    <property type="entry name" value="Histone-like_DNA-bd_CS"/>
</dbReference>
<dbReference type="InterPro" id="IPR010992">
    <property type="entry name" value="IHF-like_DNA-bd_dom_sf"/>
</dbReference>
<dbReference type="PANTHER" id="PTHR33175">
    <property type="entry name" value="DNA-BINDING PROTEIN HU"/>
    <property type="match status" value="1"/>
</dbReference>
<dbReference type="PANTHER" id="PTHR33175:SF12">
    <property type="entry name" value="DNA-BINDING PROTEIN HU-ALPHA"/>
    <property type="match status" value="1"/>
</dbReference>
<dbReference type="Pfam" id="PF00216">
    <property type="entry name" value="Bac_DNA_binding"/>
    <property type="match status" value="1"/>
</dbReference>
<dbReference type="PRINTS" id="PR01727">
    <property type="entry name" value="DNABINDINGHU"/>
</dbReference>
<dbReference type="SMART" id="SM00411">
    <property type="entry name" value="BHL"/>
    <property type="match status" value="1"/>
</dbReference>
<dbReference type="SUPFAM" id="SSF47729">
    <property type="entry name" value="IHF-like DNA-binding proteins"/>
    <property type="match status" value="1"/>
</dbReference>
<dbReference type="PROSITE" id="PS00045">
    <property type="entry name" value="HISTONE_LIKE"/>
    <property type="match status" value="1"/>
</dbReference>
<name>DBH_BUCAI</name>